<sequence length="330" mass="35453">MENSIILPIIIIAAVLIALAILFTFVPVALWISALAAGVKISIFTLIGMRLRRVVPNRVINPLIKAHKAGLNVKTNQLESHYLAGGNVDRVVNALIAAHRANIDLPFERGAAIDLAGRDVLEAVQMSVNPKVIETPFIAGIAMDGIEVKALARITVRANIDRLVGGAGEETIIARVGEGVVSTIGSSDHHKQVLENPDSISQTVLSKGLDSGTAFEILSIDIADVDIGKNIGAILQTDQAEADKNIAQAKAEERRAMAVAQEQEMVARVQEMRAKVVEAEADVPLALAEALRSGKMGVMDYMNYQNIDADTDMRDSIGKLSKENKDDDQQ</sequence>
<reference key="1">
    <citation type="journal article" date="2002" name="Nucleic Acids Res.">
        <title>Genome sequence of Oceanobacillus iheyensis isolated from the Iheya Ridge and its unexpected adaptive capabilities to extreme environments.</title>
        <authorList>
            <person name="Takami H."/>
            <person name="Takaki Y."/>
            <person name="Uchiyama I."/>
        </authorList>
    </citation>
    <scope>NUCLEOTIDE SEQUENCE [LARGE SCALE GENOMIC DNA]</scope>
    <source>
        <strain>DSM 14371 / CIP 107618 / JCM 11309 / KCTC 3954 / HTE831</strain>
    </source>
</reference>
<keyword id="KW-1003">Cell membrane</keyword>
<keyword id="KW-0472">Membrane</keyword>
<keyword id="KW-1185">Reference proteome</keyword>
<keyword id="KW-0812">Transmembrane</keyword>
<keyword id="KW-1133">Transmembrane helix</keyword>
<name>FLOA_OCEIH</name>
<dbReference type="EMBL" id="BA000028">
    <property type="protein sequence ID" value="BAC13915.1"/>
    <property type="molecule type" value="Genomic_DNA"/>
</dbReference>
<dbReference type="RefSeq" id="WP_011066356.1">
    <property type="nucleotide sequence ID" value="NC_004193.1"/>
</dbReference>
<dbReference type="SMR" id="Q8EPX2"/>
<dbReference type="STRING" id="221109.gene:10734205"/>
<dbReference type="KEGG" id="oih:OB1959"/>
<dbReference type="eggNOG" id="COG4864">
    <property type="taxonomic scope" value="Bacteria"/>
</dbReference>
<dbReference type="HOGENOM" id="CLU_836378_0_0_9"/>
<dbReference type="OrthoDB" id="9808365at2"/>
<dbReference type="PhylomeDB" id="Q8EPX2"/>
<dbReference type="Proteomes" id="UP000000822">
    <property type="component" value="Chromosome"/>
</dbReference>
<dbReference type="GO" id="GO:0045121">
    <property type="term" value="C:membrane raft"/>
    <property type="evidence" value="ECO:0007669"/>
    <property type="project" value="UniProtKB-SubCell"/>
</dbReference>
<dbReference type="GO" id="GO:0005886">
    <property type="term" value="C:plasma membrane"/>
    <property type="evidence" value="ECO:0007669"/>
    <property type="project" value="UniProtKB-SubCell"/>
</dbReference>
<dbReference type="HAMAP" id="MF_01562">
    <property type="entry name" value="FloA"/>
    <property type="match status" value="1"/>
</dbReference>
<dbReference type="InterPro" id="IPR022853">
    <property type="entry name" value="FloA"/>
</dbReference>
<dbReference type="NCBIfam" id="NF010186">
    <property type="entry name" value="PRK13665.1"/>
    <property type="match status" value="1"/>
</dbReference>
<dbReference type="Pfam" id="PF12127">
    <property type="entry name" value="FloA"/>
    <property type="match status" value="1"/>
</dbReference>
<accession>Q8EPX2</accession>
<feature type="chain" id="PRO_0000232555" description="Flotillin-like protein FloA">
    <location>
        <begin position="1"/>
        <end position="330"/>
    </location>
</feature>
<feature type="transmembrane region" description="Helical" evidence="1">
    <location>
        <begin position="5"/>
        <end position="25"/>
    </location>
</feature>
<feature type="transmembrane region" description="Helical" evidence="1">
    <location>
        <begin position="28"/>
        <end position="48"/>
    </location>
</feature>
<evidence type="ECO:0000255" key="1">
    <source>
        <dbReference type="HAMAP-Rule" id="MF_01562"/>
    </source>
</evidence>
<organism>
    <name type="scientific">Oceanobacillus iheyensis (strain DSM 14371 / CIP 107618 / JCM 11309 / KCTC 3954 / HTE831)</name>
    <dbReference type="NCBI Taxonomy" id="221109"/>
    <lineage>
        <taxon>Bacteria</taxon>
        <taxon>Bacillati</taxon>
        <taxon>Bacillota</taxon>
        <taxon>Bacilli</taxon>
        <taxon>Bacillales</taxon>
        <taxon>Bacillaceae</taxon>
        <taxon>Oceanobacillus</taxon>
    </lineage>
</organism>
<protein>
    <recommendedName>
        <fullName evidence="1">Flotillin-like protein FloA</fullName>
    </recommendedName>
</protein>
<comment type="function">
    <text evidence="1">Found in functional membrane microdomains (FMM) that may be equivalent to eukaryotic membrane rafts. FMMs are highly dynamic and increase in number as cells age. Flotillins are thought to be important factors in membrane fluidity.</text>
</comment>
<comment type="subunit">
    <text evidence="1">Homooligomerizes.</text>
</comment>
<comment type="subcellular location">
    <subcellularLocation>
        <location evidence="1">Cell membrane</location>
        <topology evidence="1">Multi-pass membrane protein</topology>
    </subcellularLocation>
    <subcellularLocation>
        <location evidence="1">Membrane raft</location>
        <topology evidence="1">Multi-pass membrane protein</topology>
    </subcellularLocation>
</comment>
<comment type="similarity">
    <text evidence="1">Belongs to the flotillin-like FloA family.</text>
</comment>
<gene>
    <name evidence="1" type="primary">floA</name>
    <name type="ordered locus">OB1959</name>
</gene>
<proteinExistence type="inferred from homology"/>